<proteinExistence type="evidence at protein level"/>
<reference key="1">
    <citation type="journal article" date="2021" name="Proc. Natl. Acad. Sci. U.S.A.">
        <title>Production, composition, and mode of action of the painful defensive venom produced by a limacodid caterpillar, Doratifera vulnerans.</title>
        <authorList>
            <person name="Walker A.A."/>
            <person name="Robinson S.D."/>
            <person name="Paluzzi J.V."/>
            <person name="Merritt D.J."/>
            <person name="Nixon S.A."/>
            <person name="Schroeder C.I."/>
            <person name="Jin J."/>
            <person name="Goudarzi M.H."/>
            <person name="Kotze A.C."/>
            <person name="Dekan Z."/>
            <person name="Sombke A."/>
            <person name="Alewood P.F."/>
            <person name="Fry B.G."/>
            <person name="Epstein M.E."/>
            <person name="Vetter I."/>
            <person name="King G.F."/>
        </authorList>
    </citation>
    <scope>NUCLEOTIDE SEQUENCE [MRNA]</scope>
    <scope>PROTEIN SEQUENCE OF 33-63; 79-109 AND 125-155</scope>
    <scope>FUNCTION</scope>
    <scope>SUBCELLULAR LOCATION</scope>
    <scope>AMIDATION AT PRO-63; PRO-109 AND PRO-155</scope>
    <scope>IDENTIFICATION BY MASS SPECTROMETRY</scope>
    <source>
        <tissue>Venom</tissue>
    </source>
</reference>
<feature type="signal peptide" evidence="1">
    <location>
        <begin position="1"/>
        <end position="24"/>
    </location>
</feature>
<feature type="propeptide" id="PRO_0000453408" evidence="6">
    <location>
        <begin position="25"/>
        <end position="32"/>
    </location>
</feature>
<feature type="peptide" id="PRO_0000453409" description="U-limacoditoxin(8)-Dv66" evidence="3">
    <location>
        <begin position="33"/>
        <end position="63"/>
    </location>
</feature>
<feature type="propeptide" id="PRO_0000453410" evidence="3">
    <location>
        <begin position="64"/>
        <end position="78"/>
    </location>
</feature>
<feature type="peptide" id="PRO_0000453411" description="U-limacoditoxin(8)-Dv66" evidence="3">
    <location>
        <begin position="79"/>
        <end position="109"/>
    </location>
</feature>
<feature type="propeptide" id="PRO_0000453412" evidence="3">
    <location>
        <begin position="110"/>
        <end position="124"/>
    </location>
</feature>
<feature type="peptide" id="PRO_0000453413" description="U-limacoditoxin(8)-Dv66" evidence="3">
    <location>
        <begin position="125"/>
        <end position="155"/>
    </location>
</feature>
<feature type="repeat" description="1" evidence="6">
    <location>
        <begin position="33"/>
        <end position="78"/>
    </location>
</feature>
<feature type="repeat" description="2" evidence="6">
    <location>
        <begin position="79"/>
        <end position="124"/>
    </location>
</feature>
<feature type="repeat" description="3; half-length" evidence="6">
    <location>
        <begin position="125"/>
        <end position="158"/>
    </location>
</feature>
<feature type="region of interest" description="3 X 46 AA tandem repeats" evidence="6">
    <location>
        <begin position="33"/>
        <end position="158"/>
    </location>
</feature>
<feature type="region of interest" description="Disordered" evidence="2">
    <location>
        <begin position="101"/>
        <end position="120"/>
    </location>
</feature>
<feature type="modified residue" description="Proline amide" evidence="3">
    <location>
        <position position="63"/>
    </location>
</feature>
<feature type="modified residue" description="Proline amide" evidence="3">
    <location>
        <position position="109"/>
    </location>
</feature>
<feature type="modified residue" description="Proline amide" evidence="3">
    <location>
        <position position="155"/>
    </location>
</feature>
<accession>P0DUT2</accession>
<name>U866_DORVU</name>
<keyword id="KW-0027">Amidation</keyword>
<keyword id="KW-0165">Cleavage on pair of basic residues</keyword>
<keyword id="KW-0903">Direct protein sequencing</keyword>
<keyword id="KW-0677">Repeat</keyword>
<keyword id="KW-0964">Secreted</keyword>
<keyword id="KW-0732">Signal</keyword>
<keyword id="KW-0800">Toxin</keyword>
<organism>
    <name type="scientific">Doratifera vulnerans</name>
    <name type="common">Mottled cup moth</name>
    <dbReference type="NCBI Taxonomy" id="1372962"/>
    <lineage>
        <taxon>Eukaryota</taxon>
        <taxon>Metazoa</taxon>
        <taxon>Ecdysozoa</taxon>
        <taxon>Arthropoda</taxon>
        <taxon>Hexapoda</taxon>
        <taxon>Insecta</taxon>
        <taxon>Pterygota</taxon>
        <taxon>Neoptera</taxon>
        <taxon>Endopterygota</taxon>
        <taxon>Lepidoptera</taxon>
        <taxon>Glossata</taxon>
        <taxon>Ditrysia</taxon>
        <taxon>Zygaenoidea</taxon>
        <taxon>Limacodidae</taxon>
        <taxon>Doratifera</taxon>
    </lineage>
</organism>
<dbReference type="SMR" id="P0DUT2"/>
<dbReference type="GO" id="GO:0005615">
    <property type="term" value="C:extracellular space"/>
    <property type="evidence" value="ECO:0007669"/>
    <property type="project" value="TreeGrafter"/>
</dbReference>
<dbReference type="GO" id="GO:0008613">
    <property type="term" value="F:diuretic hormone activity"/>
    <property type="evidence" value="ECO:0007669"/>
    <property type="project" value="InterPro"/>
</dbReference>
<dbReference type="GO" id="GO:0001664">
    <property type="term" value="F:G protein-coupled receptor binding"/>
    <property type="evidence" value="ECO:0007669"/>
    <property type="project" value="TreeGrafter"/>
</dbReference>
<dbReference type="GO" id="GO:0090729">
    <property type="term" value="F:toxin activity"/>
    <property type="evidence" value="ECO:0007669"/>
    <property type="project" value="UniProtKB-KW"/>
</dbReference>
<dbReference type="GO" id="GO:0007589">
    <property type="term" value="P:body fluid secretion"/>
    <property type="evidence" value="ECO:0007669"/>
    <property type="project" value="InterPro"/>
</dbReference>
<dbReference type="InterPro" id="IPR034439">
    <property type="entry name" value="DH2-like"/>
</dbReference>
<dbReference type="PANTHER" id="PTHR41146">
    <property type="entry name" value="DIURETIC HORMONE CLASS 2"/>
    <property type="match status" value="1"/>
</dbReference>
<dbReference type="PANTHER" id="PTHR41146:SF1">
    <property type="entry name" value="DIURETIC HORMONE CLASS 2"/>
    <property type="match status" value="1"/>
</dbReference>
<comment type="function">
    <text evidence="3">Probable toxin. Does not show insecticidal, antimicrobial and antiparasitic activities. Does not induce increase in intracellular calcium in mouse DRG neurons, suggesting that it does not induce pain.</text>
</comment>
<comment type="subcellular location">
    <subcellularLocation>
        <location evidence="3">Secreted</location>
    </subcellularLocation>
</comment>
<comment type="tissue specificity">
    <text evidence="6">Expressed by the venom secretory cell of the spine. The spine is a cuticular structure containing a single large nucleated venom-secreting cell at its base. It is an independent unit capable of producing, storing and injecting venom. On the back of D.vulnerans caterpillars, spines are grouped together by 50 to 100 to form scoli, of which there are eight in D.vulnerans.</text>
</comment>
<comment type="developmental stage">
    <text evidence="3">Only secreted by larvae. Adult moth do not have spines.</text>
</comment>
<comment type="miscellaneous">
    <text evidence="5">Is also classified in the limacoditoxin-8 (DH31) family.</text>
</comment>
<comment type="similarity">
    <text evidence="5">Belongs to the diuretic hormone class 2 family.</text>
</comment>
<evidence type="ECO:0000255" key="1"/>
<evidence type="ECO:0000256" key="2">
    <source>
        <dbReference type="SAM" id="MobiDB-lite"/>
    </source>
</evidence>
<evidence type="ECO:0000269" key="3">
    <source>
    </source>
</evidence>
<evidence type="ECO:0000303" key="4">
    <source>
    </source>
</evidence>
<evidence type="ECO:0000305" key="5"/>
<evidence type="ECO:0000305" key="6">
    <source>
    </source>
</evidence>
<sequence length="158" mass="17547">MALRAPWIALCCVLAVLFVVPAATRDEERQKRGVDFGLQRGFSGSELAKLKLALARAQDPHGPGRKRRDAYEMERQKRGVDFGLQRGFSGSELAKLKLALARAQDPHGPGRKRRDAYEMERQKRGVDFGLQRGFSGSELAKLKLALARAQDPHGPGRK</sequence>
<protein>
    <recommendedName>
        <fullName evidence="4">U-limacoditoxin(8)-Dv66</fullName>
        <shortName evidence="4">U-LCTX(8)-Dv66</shortName>
    </recommendedName>
    <alternativeName>
        <fullName evidence="4">Vulnericin</fullName>
    </alternativeName>
</protein>